<gene>
    <name evidence="1" type="primary">lolD</name>
    <name type="ordered locus">Rmet_1041</name>
</gene>
<sequence length="249" mass="26573">MSDTTLLPEASFQAGTQGPGTPTGTPVLLGEGLTKRFKQGGLDVEVLRGVDVRVDAGEKVAIVGASGSGKSTLLHVLGGLDNPDAGRVALLGKPFTALREKQRNIVRNRSLGFVYQFHHLLPEFTALDNVAMPMRIRGLSEPAARAEAQAVLERVGLGGRSKHRPGELSGGERQRVAIARALVGKPACVLADEPTGNLDDHTAGGVYDLMLELSRTLGTSFVIVTHDLDLAGRCDRVLRLRDGHLHQER</sequence>
<feature type="chain" id="PRO_0000272131" description="Lipoprotein-releasing system ATP-binding protein LolD">
    <location>
        <begin position="1"/>
        <end position="249"/>
    </location>
</feature>
<feature type="domain" description="ABC transporter" evidence="1">
    <location>
        <begin position="28"/>
        <end position="249"/>
    </location>
</feature>
<feature type="region of interest" description="Disordered" evidence="2">
    <location>
        <begin position="1"/>
        <end position="23"/>
    </location>
</feature>
<feature type="binding site" evidence="1">
    <location>
        <begin position="64"/>
        <end position="71"/>
    </location>
    <ligand>
        <name>ATP</name>
        <dbReference type="ChEBI" id="CHEBI:30616"/>
    </ligand>
</feature>
<protein>
    <recommendedName>
        <fullName evidence="1">Lipoprotein-releasing system ATP-binding protein LolD</fullName>
        <ecNumber evidence="1">7.6.2.-</ecNumber>
    </recommendedName>
</protein>
<name>LOLD_CUPMC</name>
<reference key="1">
    <citation type="journal article" date="2010" name="PLoS ONE">
        <title>The complete genome sequence of Cupriavidus metallidurans strain CH34, a master survivalist in harsh and anthropogenic environments.</title>
        <authorList>
            <person name="Janssen P.J."/>
            <person name="Van Houdt R."/>
            <person name="Moors H."/>
            <person name="Monsieurs P."/>
            <person name="Morin N."/>
            <person name="Michaux A."/>
            <person name="Benotmane M.A."/>
            <person name="Leys N."/>
            <person name="Vallaeys T."/>
            <person name="Lapidus A."/>
            <person name="Monchy S."/>
            <person name="Medigue C."/>
            <person name="Taghavi S."/>
            <person name="McCorkle S."/>
            <person name="Dunn J."/>
            <person name="van der Lelie D."/>
            <person name="Mergeay M."/>
        </authorList>
    </citation>
    <scope>NUCLEOTIDE SEQUENCE [LARGE SCALE GENOMIC DNA]</scope>
    <source>
        <strain>ATCC 43123 / DSM 2839 / NBRC 102507 / CH34</strain>
    </source>
</reference>
<accession>Q1LPJ9</accession>
<dbReference type="EC" id="7.6.2.-" evidence="1"/>
<dbReference type="EMBL" id="CP000352">
    <property type="protein sequence ID" value="ABF07927.1"/>
    <property type="molecule type" value="Genomic_DNA"/>
</dbReference>
<dbReference type="RefSeq" id="WP_011515832.1">
    <property type="nucleotide sequence ID" value="NC_007973.1"/>
</dbReference>
<dbReference type="SMR" id="Q1LPJ9"/>
<dbReference type="STRING" id="266264.Rmet_1041"/>
<dbReference type="KEGG" id="rme:Rmet_1041"/>
<dbReference type="eggNOG" id="COG1136">
    <property type="taxonomic scope" value="Bacteria"/>
</dbReference>
<dbReference type="HOGENOM" id="CLU_000604_1_22_4"/>
<dbReference type="Proteomes" id="UP000002429">
    <property type="component" value="Chromosome"/>
</dbReference>
<dbReference type="GO" id="GO:0005886">
    <property type="term" value="C:plasma membrane"/>
    <property type="evidence" value="ECO:0007669"/>
    <property type="project" value="UniProtKB-SubCell"/>
</dbReference>
<dbReference type="GO" id="GO:0005524">
    <property type="term" value="F:ATP binding"/>
    <property type="evidence" value="ECO:0007669"/>
    <property type="project" value="UniProtKB-KW"/>
</dbReference>
<dbReference type="GO" id="GO:0016887">
    <property type="term" value="F:ATP hydrolysis activity"/>
    <property type="evidence" value="ECO:0007669"/>
    <property type="project" value="InterPro"/>
</dbReference>
<dbReference type="GO" id="GO:0022857">
    <property type="term" value="F:transmembrane transporter activity"/>
    <property type="evidence" value="ECO:0007669"/>
    <property type="project" value="TreeGrafter"/>
</dbReference>
<dbReference type="GO" id="GO:0044874">
    <property type="term" value="P:lipoprotein localization to outer membrane"/>
    <property type="evidence" value="ECO:0007669"/>
    <property type="project" value="TreeGrafter"/>
</dbReference>
<dbReference type="GO" id="GO:0089705">
    <property type="term" value="P:protein localization to outer membrane"/>
    <property type="evidence" value="ECO:0007669"/>
    <property type="project" value="TreeGrafter"/>
</dbReference>
<dbReference type="CDD" id="cd03255">
    <property type="entry name" value="ABC_MJ0796_LolCDE_FtsE"/>
    <property type="match status" value="1"/>
</dbReference>
<dbReference type="FunFam" id="3.40.50.300:FF:000230">
    <property type="entry name" value="Lipoprotein-releasing system ATP-binding protein LolD"/>
    <property type="match status" value="1"/>
</dbReference>
<dbReference type="Gene3D" id="3.40.50.300">
    <property type="entry name" value="P-loop containing nucleotide triphosphate hydrolases"/>
    <property type="match status" value="1"/>
</dbReference>
<dbReference type="InterPro" id="IPR003593">
    <property type="entry name" value="AAA+_ATPase"/>
</dbReference>
<dbReference type="InterPro" id="IPR003439">
    <property type="entry name" value="ABC_transporter-like_ATP-bd"/>
</dbReference>
<dbReference type="InterPro" id="IPR017871">
    <property type="entry name" value="ABC_transporter-like_CS"/>
</dbReference>
<dbReference type="InterPro" id="IPR015854">
    <property type="entry name" value="ABC_transpr_LolD-like"/>
</dbReference>
<dbReference type="InterPro" id="IPR017911">
    <property type="entry name" value="MacB-like_ATP-bd"/>
</dbReference>
<dbReference type="InterPro" id="IPR027417">
    <property type="entry name" value="P-loop_NTPase"/>
</dbReference>
<dbReference type="PANTHER" id="PTHR24220">
    <property type="entry name" value="IMPORT ATP-BINDING PROTEIN"/>
    <property type="match status" value="1"/>
</dbReference>
<dbReference type="PANTHER" id="PTHR24220:SF689">
    <property type="entry name" value="LIPOPROTEIN-RELEASING SYSTEM ATP-BINDING PROTEIN LOLD"/>
    <property type="match status" value="1"/>
</dbReference>
<dbReference type="Pfam" id="PF00005">
    <property type="entry name" value="ABC_tran"/>
    <property type="match status" value="1"/>
</dbReference>
<dbReference type="SMART" id="SM00382">
    <property type="entry name" value="AAA"/>
    <property type="match status" value="1"/>
</dbReference>
<dbReference type="SUPFAM" id="SSF52540">
    <property type="entry name" value="P-loop containing nucleoside triphosphate hydrolases"/>
    <property type="match status" value="1"/>
</dbReference>
<dbReference type="PROSITE" id="PS00211">
    <property type="entry name" value="ABC_TRANSPORTER_1"/>
    <property type="match status" value="1"/>
</dbReference>
<dbReference type="PROSITE" id="PS50893">
    <property type="entry name" value="ABC_TRANSPORTER_2"/>
    <property type="match status" value="1"/>
</dbReference>
<dbReference type="PROSITE" id="PS51244">
    <property type="entry name" value="LOLD"/>
    <property type="match status" value="1"/>
</dbReference>
<evidence type="ECO:0000255" key="1">
    <source>
        <dbReference type="HAMAP-Rule" id="MF_01708"/>
    </source>
</evidence>
<evidence type="ECO:0000256" key="2">
    <source>
        <dbReference type="SAM" id="MobiDB-lite"/>
    </source>
</evidence>
<keyword id="KW-0067">ATP-binding</keyword>
<keyword id="KW-0997">Cell inner membrane</keyword>
<keyword id="KW-1003">Cell membrane</keyword>
<keyword id="KW-0472">Membrane</keyword>
<keyword id="KW-0547">Nucleotide-binding</keyword>
<keyword id="KW-1185">Reference proteome</keyword>
<keyword id="KW-1278">Translocase</keyword>
<keyword id="KW-0813">Transport</keyword>
<comment type="function">
    <text evidence="1">Part of the ABC transporter complex LolCDE involved in the translocation of mature outer membrane-directed lipoproteins, from the inner membrane to the periplasmic chaperone, LolA. Responsible for the formation of the LolA-lipoprotein complex in an ATP-dependent manner.</text>
</comment>
<comment type="subunit">
    <text evidence="1">The complex is composed of two ATP-binding proteins (LolD) and two transmembrane proteins (LolC and LolE).</text>
</comment>
<comment type="subcellular location">
    <subcellularLocation>
        <location evidence="1">Cell inner membrane</location>
        <topology evidence="1">Peripheral membrane protein</topology>
    </subcellularLocation>
</comment>
<comment type="similarity">
    <text evidence="1">Belongs to the ABC transporter superfamily. Lipoprotein translocase (TC 3.A.1.125) family.</text>
</comment>
<proteinExistence type="inferred from homology"/>
<organism>
    <name type="scientific">Cupriavidus metallidurans (strain ATCC 43123 / DSM 2839 / NBRC 102507 / CH34)</name>
    <name type="common">Ralstonia metallidurans</name>
    <dbReference type="NCBI Taxonomy" id="266264"/>
    <lineage>
        <taxon>Bacteria</taxon>
        <taxon>Pseudomonadati</taxon>
        <taxon>Pseudomonadota</taxon>
        <taxon>Betaproteobacteria</taxon>
        <taxon>Burkholderiales</taxon>
        <taxon>Burkholderiaceae</taxon>
        <taxon>Cupriavidus</taxon>
    </lineage>
</organism>